<reference key="1">
    <citation type="journal article" date="1998" name="Nature">
        <title>Deciphering the biology of Mycobacterium tuberculosis from the complete genome sequence.</title>
        <authorList>
            <person name="Cole S.T."/>
            <person name="Brosch R."/>
            <person name="Parkhill J."/>
            <person name="Garnier T."/>
            <person name="Churcher C.M."/>
            <person name="Harris D.E."/>
            <person name="Gordon S.V."/>
            <person name="Eiglmeier K."/>
            <person name="Gas S."/>
            <person name="Barry C.E. III"/>
            <person name="Tekaia F."/>
            <person name="Badcock K."/>
            <person name="Basham D."/>
            <person name="Brown D."/>
            <person name="Chillingworth T."/>
            <person name="Connor R."/>
            <person name="Davies R.M."/>
            <person name="Devlin K."/>
            <person name="Feltwell T."/>
            <person name="Gentles S."/>
            <person name="Hamlin N."/>
            <person name="Holroyd S."/>
            <person name="Hornsby T."/>
            <person name="Jagels K."/>
            <person name="Krogh A."/>
            <person name="McLean J."/>
            <person name="Moule S."/>
            <person name="Murphy L.D."/>
            <person name="Oliver S."/>
            <person name="Osborne J."/>
            <person name="Quail M.A."/>
            <person name="Rajandream M.A."/>
            <person name="Rogers J."/>
            <person name="Rutter S."/>
            <person name="Seeger K."/>
            <person name="Skelton S."/>
            <person name="Squares S."/>
            <person name="Squares R."/>
            <person name="Sulston J.E."/>
            <person name="Taylor K."/>
            <person name="Whitehead S."/>
            <person name="Barrell B.G."/>
        </authorList>
    </citation>
    <scope>NUCLEOTIDE SEQUENCE [LARGE SCALE GENOMIC DNA]</scope>
    <source>
        <strain>ATCC 25618 / H37Rv</strain>
    </source>
</reference>
<reference key="2">
    <citation type="journal article" date="2011" name="Mol. Cell. Proteomics">
        <title>Proteogenomic analysis of Mycobacterium tuberculosis by high resolution mass spectrometry.</title>
        <authorList>
            <person name="Kelkar D.S."/>
            <person name="Kumar D."/>
            <person name="Kumar P."/>
            <person name="Balakrishnan L."/>
            <person name="Muthusamy B."/>
            <person name="Yadav A.K."/>
            <person name="Shrivastava P."/>
            <person name="Marimuthu A."/>
            <person name="Anand S."/>
            <person name="Sundaram H."/>
            <person name="Kingsbury R."/>
            <person name="Harsha H.C."/>
            <person name="Nair B."/>
            <person name="Prasad T.S."/>
            <person name="Chauhan D.S."/>
            <person name="Katoch K."/>
            <person name="Katoch V.M."/>
            <person name="Kumar P."/>
            <person name="Chaerkady R."/>
            <person name="Ramachandran S."/>
            <person name="Dash D."/>
            <person name="Pandey A."/>
        </authorList>
    </citation>
    <scope>IDENTIFICATION BY MASS SPECTROMETRY [LARGE SCALE ANALYSIS]</scope>
    <source>
        <strain>ATCC 25618 / H37Rv</strain>
    </source>
</reference>
<gene>
    <name type="primary">pcp</name>
    <name type="ordered locus">Rv0319</name>
    <name type="ORF">MTCY63.24</name>
</gene>
<sequence>MSKVLVTGFGPYGVTPVNPAQLTAEELDGRTIAGATVISRIVPNTFFESIAAAQQAIAEIEPALVIMLGEYPGRSMITVERLAQNVNDCGRYGLADCAGRVLVGEPTDPAGPVAYHATVPVRAMVLAMRKAGVPADVSDAAGTFVCNHLMYGVLHHLAQKGLPVRAGWIHLPCLPSVAALDHNLGVPSMSVQTAVAGVTAGIEAAIRQSADIREPIPSRLQI</sequence>
<accession>P9WIJ5</accession>
<accession>L0T508</accession>
<accession>O07930</accession>
<accession>P0A5R4</accession>
<proteinExistence type="evidence at protein level"/>
<organism>
    <name type="scientific">Mycobacterium tuberculosis (strain ATCC 25618 / H37Rv)</name>
    <dbReference type="NCBI Taxonomy" id="83332"/>
    <lineage>
        <taxon>Bacteria</taxon>
        <taxon>Bacillati</taxon>
        <taxon>Actinomycetota</taxon>
        <taxon>Actinomycetes</taxon>
        <taxon>Mycobacteriales</taxon>
        <taxon>Mycobacteriaceae</taxon>
        <taxon>Mycobacterium</taxon>
        <taxon>Mycobacterium tuberculosis complex</taxon>
    </lineage>
</organism>
<evidence type="ECO:0000250" key="1"/>
<evidence type="ECO:0000305" key="2"/>
<keyword id="KW-0963">Cytoplasm</keyword>
<keyword id="KW-0378">Hydrolase</keyword>
<keyword id="KW-0645">Protease</keyword>
<keyword id="KW-1185">Reference proteome</keyword>
<keyword id="KW-0788">Thiol protease</keyword>
<name>PCP_MYCTU</name>
<protein>
    <recommendedName>
        <fullName>Pyrrolidone-carboxylate peptidase</fullName>
        <ecNumber>3.4.19.3</ecNumber>
    </recommendedName>
    <alternativeName>
        <fullName>5-oxoprolyl-peptidase</fullName>
    </alternativeName>
    <alternativeName>
        <fullName>Pyroglutamyl-peptidase I</fullName>
        <shortName>PGP-I</shortName>
        <shortName>Pyrase</shortName>
    </alternativeName>
</protein>
<dbReference type="EC" id="3.4.19.3"/>
<dbReference type="EMBL" id="AL123456">
    <property type="protein sequence ID" value="CCP43049.1"/>
    <property type="molecule type" value="Genomic_DNA"/>
</dbReference>
<dbReference type="PIR" id="H70525">
    <property type="entry name" value="H70525"/>
</dbReference>
<dbReference type="RefSeq" id="NP_214833.1">
    <property type="nucleotide sequence ID" value="NC_000962.3"/>
</dbReference>
<dbReference type="RefSeq" id="WP_003401632.1">
    <property type="nucleotide sequence ID" value="NZ_NVQJ01000026.1"/>
</dbReference>
<dbReference type="SMR" id="P9WIJ5"/>
<dbReference type="FunCoup" id="P9WIJ5">
    <property type="interactions" value="22"/>
</dbReference>
<dbReference type="STRING" id="83332.Rv0319"/>
<dbReference type="PaxDb" id="83332-Rv0319"/>
<dbReference type="DNASU" id="886555"/>
<dbReference type="GeneID" id="45424287"/>
<dbReference type="GeneID" id="886555"/>
<dbReference type="KEGG" id="mtu:Rv0319"/>
<dbReference type="KEGG" id="mtv:RVBD_0319"/>
<dbReference type="TubercuList" id="Rv0319"/>
<dbReference type="eggNOG" id="COG2039">
    <property type="taxonomic scope" value="Bacteria"/>
</dbReference>
<dbReference type="InParanoid" id="P9WIJ5"/>
<dbReference type="OrthoDB" id="9779738at2"/>
<dbReference type="PhylomeDB" id="P9WIJ5"/>
<dbReference type="Proteomes" id="UP000001584">
    <property type="component" value="Chromosome"/>
</dbReference>
<dbReference type="GO" id="GO:0005829">
    <property type="term" value="C:cytosol"/>
    <property type="evidence" value="ECO:0007669"/>
    <property type="project" value="InterPro"/>
</dbReference>
<dbReference type="GO" id="GO:0016920">
    <property type="term" value="F:pyroglutamyl-peptidase activity"/>
    <property type="evidence" value="ECO:0007669"/>
    <property type="project" value="UniProtKB-UniRule"/>
</dbReference>
<dbReference type="GO" id="GO:0006508">
    <property type="term" value="P:proteolysis"/>
    <property type="evidence" value="ECO:0007669"/>
    <property type="project" value="UniProtKB-KW"/>
</dbReference>
<dbReference type="CDD" id="cd00501">
    <property type="entry name" value="Peptidase_C15"/>
    <property type="match status" value="1"/>
</dbReference>
<dbReference type="Gene3D" id="3.40.630.20">
    <property type="entry name" value="Peptidase C15, pyroglutamyl peptidase I-like"/>
    <property type="match status" value="1"/>
</dbReference>
<dbReference type="HAMAP" id="MF_00417">
    <property type="entry name" value="Pyrrolid_peptidase"/>
    <property type="match status" value="1"/>
</dbReference>
<dbReference type="InterPro" id="IPR000816">
    <property type="entry name" value="Peptidase_C15"/>
</dbReference>
<dbReference type="InterPro" id="IPR016125">
    <property type="entry name" value="Peptidase_C15-like"/>
</dbReference>
<dbReference type="InterPro" id="IPR036440">
    <property type="entry name" value="Peptidase_C15-like_sf"/>
</dbReference>
<dbReference type="InterPro" id="IPR029762">
    <property type="entry name" value="PGP-I_bact-type"/>
</dbReference>
<dbReference type="InterPro" id="IPR033694">
    <property type="entry name" value="PGPEP1_Cys_AS"/>
</dbReference>
<dbReference type="InterPro" id="IPR033693">
    <property type="entry name" value="PGPEP1_Glu_AS"/>
</dbReference>
<dbReference type="NCBIfam" id="NF009674">
    <property type="entry name" value="PRK13195.1"/>
    <property type="match status" value="1"/>
</dbReference>
<dbReference type="NCBIfam" id="NF009676">
    <property type="entry name" value="PRK13197.1"/>
    <property type="match status" value="1"/>
</dbReference>
<dbReference type="NCBIfam" id="TIGR00504">
    <property type="entry name" value="pyro_pdase"/>
    <property type="match status" value="1"/>
</dbReference>
<dbReference type="PANTHER" id="PTHR23402">
    <property type="entry name" value="PROTEASE FAMILY C15 PYROGLUTAMYL-PEPTIDASE I-RELATED"/>
    <property type="match status" value="1"/>
</dbReference>
<dbReference type="PANTHER" id="PTHR23402:SF1">
    <property type="entry name" value="PYROGLUTAMYL-PEPTIDASE I"/>
    <property type="match status" value="1"/>
</dbReference>
<dbReference type="Pfam" id="PF01470">
    <property type="entry name" value="Peptidase_C15"/>
    <property type="match status" value="1"/>
</dbReference>
<dbReference type="PIRSF" id="PIRSF015592">
    <property type="entry name" value="Prld-crbxl_pptds"/>
    <property type="match status" value="1"/>
</dbReference>
<dbReference type="PRINTS" id="PR00706">
    <property type="entry name" value="PYROGLUPTASE"/>
</dbReference>
<dbReference type="SUPFAM" id="SSF53182">
    <property type="entry name" value="Pyrrolidone carboxyl peptidase (pyroglutamate aminopeptidase)"/>
    <property type="match status" value="1"/>
</dbReference>
<dbReference type="PROSITE" id="PS01334">
    <property type="entry name" value="PYRASE_CYS"/>
    <property type="match status" value="1"/>
</dbReference>
<dbReference type="PROSITE" id="PS01333">
    <property type="entry name" value="PYRASE_GLU"/>
    <property type="match status" value="1"/>
</dbReference>
<comment type="function">
    <text evidence="1">Removes 5-oxoproline from various penultimate amino acid residues except L-proline.</text>
</comment>
<comment type="catalytic activity">
    <reaction>
        <text>Release of an N-terminal pyroglutamyl group from a polypeptide, the second amino acid generally not being Pro.</text>
        <dbReference type="EC" id="3.4.19.3"/>
    </reaction>
</comment>
<comment type="subunit">
    <text evidence="1">Homotetramer.</text>
</comment>
<comment type="subcellular location">
    <subcellularLocation>
        <location evidence="1">Cytoplasm</location>
    </subcellularLocation>
</comment>
<comment type="similarity">
    <text evidence="2">Belongs to the peptidase C15 family.</text>
</comment>
<feature type="chain" id="PRO_0000184724" description="Pyrrolidone-carboxylate peptidase">
    <location>
        <begin position="1"/>
        <end position="222"/>
    </location>
</feature>
<feature type="active site" evidence="1">
    <location>
        <position position="80"/>
    </location>
</feature>
<feature type="active site" evidence="1">
    <location>
        <position position="146"/>
    </location>
</feature>
<feature type="active site" evidence="1">
    <location>
        <position position="170"/>
    </location>
</feature>